<gene>
    <name type="ordered locus">Pret-172</name>
</gene>
<protein>
    <recommendedName>
        <fullName>Protein DP71L</fullName>
    </recommendedName>
    <alternativeName>
        <fullName>MyD116 homolog</fullName>
    </alternativeName>
</protein>
<feature type="chain" id="PRO_0000379086" description="Protein DP71L">
    <location>
        <begin position="1"/>
        <end position="71"/>
    </location>
</feature>
<feature type="region of interest" description="Important for host CHOP inhibition" evidence="1">
    <location>
        <begin position="16"/>
        <end position="18"/>
    </location>
</feature>
<feature type="region of interest" description="Important for host CHOP inhibition" evidence="1">
    <location>
        <begin position="57"/>
        <end position="61"/>
    </location>
</feature>
<reference key="1">
    <citation type="submission" date="2003-03" db="EMBL/GenBank/DDBJ databases">
        <title>African swine fever virus genomes.</title>
        <authorList>
            <person name="Kutish G.F."/>
            <person name="Rock D.L."/>
        </authorList>
    </citation>
    <scope>NUCLEOTIDE SEQUENCE [LARGE SCALE GENOMIC DNA]</scope>
</reference>
<proteinExistence type="inferred from homology"/>
<keyword id="KW-0945">Host-virus interaction</keyword>
<keyword id="KW-1090">Inhibition of host innate immune response by virus</keyword>
<keyword id="KW-1114">Inhibition of host interferon signaling pathway by virus</keyword>
<keyword id="KW-0922">Interferon antiviral system evasion</keyword>
<keyword id="KW-0426">Late protein</keyword>
<keyword id="KW-1126">Modulation of host PP1 activity by virus</keyword>
<keyword id="KW-0899">Viral immunoevasion</keyword>
<accession>P0C756</accession>
<comment type="function">
    <text evidence="1">Interacts with the host phosphatase PP1 catalytic subunit (PPP1CB) and recruits it to dephosphorylate EIF2S1/eIF2alpha and therefore restores the host translation that has been shut-down by the host. Also inhibits the EIF2S1/eIF2alpha-ATF4-DDIT3/CHOP pathway.</text>
</comment>
<comment type="subunit">
    <text evidence="1">Interacts (via C-terminus) with host PPP1CB.</text>
</comment>
<comment type="induction">
    <text evidence="2">Expressed in the late phase of the viral replicative cycle.</text>
</comment>
<comment type="similarity">
    <text evidence="2">Belongs to the asfivirus DP71L family.</text>
</comment>
<organismHost>
    <name type="scientific">Ornithodoros</name>
    <name type="common">relapsing fever ticks</name>
    <dbReference type="NCBI Taxonomy" id="6937"/>
</organismHost>
<organismHost>
    <name type="scientific">Phacochoerus aethiopicus</name>
    <name type="common">Warthog</name>
    <dbReference type="NCBI Taxonomy" id="85517"/>
</organismHost>
<organismHost>
    <name type="scientific">Phacochoerus africanus</name>
    <name type="common">Warthog</name>
    <dbReference type="NCBI Taxonomy" id="41426"/>
</organismHost>
<organismHost>
    <name type="scientific">Potamochoerus larvatus</name>
    <name type="common">Bushpig</name>
    <dbReference type="NCBI Taxonomy" id="273792"/>
</organismHost>
<organismHost>
    <name type="scientific">Sus scrofa</name>
    <name type="common">Pig</name>
    <dbReference type="NCBI Taxonomy" id="9823"/>
</organismHost>
<sequence length="71" mass="8418">MGGRRRKKRTNDVKHVRFAAAVEVWEADDIERKGPWEQAAVDRFRFQRRIASVEELLSAVLLRQKKLLEQQ</sequence>
<organism>
    <name type="scientific">African swine fever virus (isolate Tick/South Africa/Pretoriuskop Pr4/1996)</name>
    <name type="common">ASFV</name>
    <dbReference type="NCBI Taxonomy" id="561443"/>
    <lineage>
        <taxon>Viruses</taxon>
        <taxon>Varidnaviria</taxon>
        <taxon>Bamfordvirae</taxon>
        <taxon>Nucleocytoviricota</taxon>
        <taxon>Pokkesviricetes</taxon>
        <taxon>Asfuvirales</taxon>
        <taxon>Asfarviridae</taxon>
        <taxon>Asfivirus</taxon>
        <taxon>African swine fever virus</taxon>
    </lineage>
</organism>
<evidence type="ECO:0000250" key="1">
    <source>
        <dbReference type="UniProtKB" id="Q65212"/>
    </source>
</evidence>
<evidence type="ECO:0000305" key="2"/>
<name>DP71L_ASFP4</name>
<dbReference type="EMBL" id="AY261363">
    <property type="status" value="NOT_ANNOTATED_CDS"/>
    <property type="molecule type" value="Genomic_DNA"/>
</dbReference>
<dbReference type="SMR" id="P0C756"/>
<dbReference type="Proteomes" id="UP000000859">
    <property type="component" value="Segment"/>
</dbReference>
<dbReference type="GO" id="GO:0004865">
    <property type="term" value="F:protein serine/threonine phosphatase inhibitor activity"/>
    <property type="evidence" value="ECO:0007669"/>
    <property type="project" value="UniProtKB-KW"/>
</dbReference>
<dbReference type="GO" id="GO:0060255">
    <property type="term" value="P:regulation of macromolecule metabolic process"/>
    <property type="evidence" value="ECO:0007669"/>
    <property type="project" value="UniProtKB-ARBA"/>
</dbReference>
<dbReference type="GO" id="GO:0080090">
    <property type="term" value="P:regulation of primary metabolic process"/>
    <property type="evidence" value="ECO:0007669"/>
    <property type="project" value="UniProtKB-ARBA"/>
</dbReference>
<dbReference type="GO" id="GO:0034976">
    <property type="term" value="P:response to endoplasmic reticulum stress"/>
    <property type="evidence" value="ECO:0007669"/>
    <property type="project" value="TreeGrafter"/>
</dbReference>
<dbReference type="GO" id="GO:0052170">
    <property type="term" value="P:symbiont-mediated suppression of host innate immune response"/>
    <property type="evidence" value="ECO:0007669"/>
    <property type="project" value="UniProtKB-KW"/>
</dbReference>
<dbReference type="GO" id="GO:0039606">
    <property type="term" value="P:symbiont-mediated suppression of host translation initiation"/>
    <property type="evidence" value="ECO:0007669"/>
    <property type="project" value="UniProtKB-KW"/>
</dbReference>
<dbReference type="GO" id="GO:0039502">
    <property type="term" value="P:symbiont-mediated suppression of host type I interferon-mediated signaling pathway"/>
    <property type="evidence" value="ECO:0007669"/>
    <property type="project" value="UniProtKB-KW"/>
</dbReference>
<dbReference type="InterPro" id="IPR051254">
    <property type="entry name" value="PPP1R15"/>
</dbReference>
<dbReference type="InterPro" id="IPR019523">
    <property type="entry name" value="Prot_Pase1_reg-su15A/B_C"/>
</dbReference>
<dbReference type="PANTHER" id="PTHR16489">
    <property type="entry name" value="GH11727P"/>
    <property type="match status" value="1"/>
</dbReference>
<dbReference type="PANTHER" id="PTHR16489:SF12">
    <property type="entry name" value="GH11727P"/>
    <property type="match status" value="1"/>
</dbReference>
<dbReference type="Pfam" id="PF10488">
    <property type="entry name" value="PP1c_bdg"/>
    <property type="match status" value="1"/>
</dbReference>